<proteinExistence type="inferred from homology"/>
<feature type="chain" id="PRO_1000051895" description="Small ribosomal subunit protein uS13">
    <location>
        <begin position="1"/>
        <end position="121"/>
    </location>
</feature>
<feature type="region of interest" description="Disordered" evidence="2">
    <location>
        <begin position="91"/>
        <end position="121"/>
    </location>
</feature>
<accession>A7X5C7</accession>
<name>RS13_STAA1</name>
<evidence type="ECO:0000255" key="1">
    <source>
        <dbReference type="HAMAP-Rule" id="MF_01315"/>
    </source>
</evidence>
<evidence type="ECO:0000256" key="2">
    <source>
        <dbReference type="SAM" id="MobiDB-lite"/>
    </source>
</evidence>
<evidence type="ECO:0000305" key="3"/>
<sequence>MARIAGVDIPREKRVVISLTYIYGIGTSTAQKILEEANVSADTRVKDLTDDELGRIREVVDGYKVEGDLRRETNLNIKRLMEISSYRGIRHRRGLPVRGQKTKNNARTRKGPVKTVANKKK</sequence>
<comment type="function">
    <text evidence="1">Located at the top of the head of the 30S subunit, it contacts several helices of the 16S rRNA. In the 70S ribosome it contacts the 23S rRNA (bridge B1a) and protein L5 of the 50S subunit (bridge B1b), connecting the 2 subunits; these bridges are implicated in subunit movement. Contacts the tRNAs in the A and P-sites.</text>
</comment>
<comment type="subunit">
    <text evidence="1">Part of the 30S ribosomal subunit. Forms a loose heterodimer with protein S19. Forms two bridges to the 50S subunit in the 70S ribosome.</text>
</comment>
<comment type="similarity">
    <text evidence="1">Belongs to the universal ribosomal protein uS13 family.</text>
</comment>
<protein>
    <recommendedName>
        <fullName evidence="1">Small ribosomal subunit protein uS13</fullName>
    </recommendedName>
    <alternativeName>
        <fullName evidence="3">30S ribosomal protein S13</fullName>
    </alternativeName>
</protein>
<keyword id="KW-0687">Ribonucleoprotein</keyword>
<keyword id="KW-0689">Ribosomal protein</keyword>
<keyword id="KW-0694">RNA-binding</keyword>
<keyword id="KW-0699">rRNA-binding</keyword>
<keyword id="KW-0820">tRNA-binding</keyword>
<reference key="1">
    <citation type="journal article" date="2008" name="Antimicrob. Agents Chemother.">
        <title>Mutated response regulator graR is responsible for phenotypic conversion of Staphylococcus aureus from heterogeneous vancomycin-intermediate resistance to vancomycin-intermediate resistance.</title>
        <authorList>
            <person name="Neoh H.-M."/>
            <person name="Cui L."/>
            <person name="Yuzawa H."/>
            <person name="Takeuchi F."/>
            <person name="Matsuo M."/>
            <person name="Hiramatsu K."/>
        </authorList>
    </citation>
    <scope>NUCLEOTIDE SEQUENCE [LARGE SCALE GENOMIC DNA]</scope>
    <source>
        <strain>Mu3 / ATCC 700698</strain>
    </source>
</reference>
<gene>
    <name evidence="1" type="primary">rpsM</name>
    <name type="ordered locus">SAHV_2210</name>
</gene>
<organism>
    <name type="scientific">Staphylococcus aureus (strain Mu3 / ATCC 700698)</name>
    <dbReference type="NCBI Taxonomy" id="418127"/>
    <lineage>
        <taxon>Bacteria</taxon>
        <taxon>Bacillati</taxon>
        <taxon>Bacillota</taxon>
        <taxon>Bacilli</taxon>
        <taxon>Bacillales</taxon>
        <taxon>Staphylococcaceae</taxon>
        <taxon>Staphylococcus</taxon>
    </lineage>
</organism>
<dbReference type="EMBL" id="AP009324">
    <property type="protein sequence ID" value="BAF79093.1"/>
    <property type="molecule type" value="Genomic_DNA"/>
</dbReference>
<dbReference type="RefSeq" id="WP_000090796.1">
    <property type="nucleotide sequence ID" value="NZ_CTYB01000025.1"/>
</dbReference>
<dbReference type="SMR" id="A7X5C7"/>
<dbReference type="GeneID" id="66840438"/>
<dbReference type="KEGG" id="saw:SAHV_2210"/>
<dbReference type="HOGENOM" id="CLU_103849_1_1_9"/>
<dbReference type="GO" id="GO:0005829">
    <property type="term" value="C:cytosol"/>
    <property type="evidence" value="ECO:0007669"/>
    <property type="project" value="TreeGrafter"/>
</dbReference>
<dbReference type="GO" id="GO:0015935">
    <property type="term" value="C:small ribosomal subunit"/>
    <property type="evidence" value="ECO:0007669"/>
    <property type="project" value="TreeGrafter"/>
</dbReference>
<dbReference type="GO" id="GO:0019843">
    <property type="term" value="F:rRNA binding"/>
    <property type="evidence" value="ECO:0007669"/>
    <property type="project" value="UniProtKB-UniRule"/>
</dbReference>
<dbReference type="GO" id="GO:0003735">
    <property type="term" value="F:structural constituent of ribosome"/>
    <property type="evidence" value="ECO:0007669"/>
    <property type="project" value="InterPro"/>
</dbReference>
<dbReference type="GO" id="GO:0000049">
    <property type="term" value="F:tRNA binding"/>
    <property type="evidence" value="ECO:0007669"/>
    <property type="project" value="UniProtKB-UniRule"/>
</dbReference>
<dbReference type="GO" id="GO:0006412">
    <property type="term" value="P:translation"/>
    <property type="evidence" value="ECO:0007669"/>
    <property type="project" value="UniProtKB-UniRule"/>
</dbReference>
<dbReference type="FunFam" id="1.10.8.50:FF:000001">
    <property type="entry name" value="30S ribosomal protein S13"/>
    <property type="match status" value="1"/>
</dbReference>
<dbReference type="FunFam" id="4.10.910.10:FF:000001">
    <property type="entry name" value="30S ribosomal protein S13"/>
    <property type="match status" value="1"/>
</dbReference>
<dbReference type="Gene3D" id="1.10.8.50">
    <property type="match status" value="1"/>
</dbReference>
<dbReference type="Gene3D" id="4.10.910.10">
    <property type="entry name" value="30s ribosomal protein s13, domain 2"/>
    <property type="match status" value="1"/>
</dbReference>
<dbReference type="HAMAP" id="MF_01315">
    <property type="entry name" value="Ribosomal_uS13"/>
    <property type="match status" value="1"/>
</dbReference>
<dbReference type="InterPro" id="IPR027437">
    <property type="entry name" value="Rbsml_uS13_C"/>
</dbReference>
<dbReference type="InterPro" id="IPR001892">
    <property type="entry name" value="Ribosomal_uS13"/>
</dbReference>
<dbReference type="InterPro" id="IPR010979">
    <property type="entry name" value="Ribosomal_uS13-like_H2TH"/>
</dbReference>
<dbReference type="InterPro" id="IPR019980">
    <property type="entry name" value="Ribosomal_uS13_bac-type"/>
</dbReference>
<dbReference type="InterPro" id="IPR018269">
    <property type="entry name" value="Ribosomal_uS13_CS"/>
</dbReference>
<dbReference type="NCBIfam" id="TIGR03631">
    <property type="entry name" value="uS13_bact"/>
    <property type="match status" value="1"/>
</dbReference>
<dbReference type="PANTHER" id="PTHR10871">
    <property type="entry name" value="30S RIBOSOMAL PROTEIN S13/40S RIBOSOMAL PROTEIN S18"/>
    <property type="match status" value="1"/>
</dbReference>
<dbReference type="PANTHER" id="PTHR10871:SF1">
    <property type="entry name" value="SMALL RIBOSOMAL SUBUNIT PROTEIN US13M"/>
    <property type="match status" value="1"/>
</dbReference>
<dbReference type="Pfam" id="PF00416">
    <property type="entry name" value="Ribosomal_S13"/>
    <property type="match status" value="1"/>
</dbReference>
<dbReference type="PIRSF" id="PIRSF002134">
    <property type="entry name" value="Ribosomal_S13"/>
    <property type="match status" value="1"/>
</dbReference>
<dbReference type="SUPFAM" id="SSF46946">
    <property type="entry name" value="S13-like H2TH domain"/>
    <property type="match status" value="1"/>
</dbReference>
<dbReference type="PROSITE" id="PS00646">
    <property type="entry name" value="RIBOSOMAL_S13_1"/>
    <property type="match status" value="1"/>
</dbReference>
<dbReference type="PROSITE" id="PS50159">
    <property type="entry name" value="RIBOSOMAL_S13_2"/>
    <property type="match status" value="1"/>
</dbReference>